<keyword id="KW-0249">Electron transport</keyword>
<keyword id="KW-0472">Membrane</keyword>
<keyword id="KW-0496">Mitochondrion</keyword>
<keyword id="KW-0520">NAD</keyword>
<keyword id="KW-0679">Respiratory chain</keyword>
<keyword id="KW-1278">Translocase</keyword>
<keyword id="KW-0812">Transmembrane</keyword>
<keyword id="KW-1133">Transmembrane helix</keyword>
<keyword id="KW-0813">Transport</keyword>
<keyword id="KW-0830">Ubiquinone</keyword>
<gene>
    <name type="primary">ND3</name>
    <name type="synonym">NAD3</name>
    <name type="synonym">NADH3</name>
</gene>
<protein>
    <recommendedName>
        <fullName>NADH-ubiquinone oxidoreductase chain 3</fullName>
        <ecNumber>7.1.1.2</ecNumber>
    </recommendedName>
    <alternativeName>
        <fullName>NADH dehydrogenase subunit 3</fullName>
    </alternativeName>
</protein>
<accession>P69237</accession>
<accession>O47429</accession>
<evidence type="ECO:0000250" key="1"/>
<evidence type="ECO:0000255" key="2"/>
<evidence type="ECO:0000305" key="3"/>
<geneLocation type="mitochondrion"/>
<comment type="function">
    <text evidence="1">Core subunit of the mitochondrial membrane respiratory chain NADH dehydrogenase (Complex I) that is believed to belong to the minimal assembly required for catalysis. Complex I functions in the transfer of electrons from NADH to the respiratory chain. The immediate electron acceptor for the enzyme is believed to be ubiquinone (By similarity).</text>
</comment>
<comment type="catalytic activity">
    <reaction>
        <text>a ubiquinone + NADH + 5 H(+)(in) = a ubiquinol + NAD(+) + 4 H(+)(out)</text>
        <dbReference type="Rhea" id="RHEA:29091"/>
        <dbReference type="Rhea" id="RHEA-COMP:9565"/>
        <dbReference type="Rhea" id="RHEA-COMP:9566"/>
        <dbReference type="ChEBI" id="CHEBI:15378"/>
        <dbReference type="ChEBI" id="CHEBI:16389"/>
        <dbReference type="ChEBI" id="CHEBI:17976"/>
        <dbReference type="ChEBI" id="CHEBI:57540"/>
        <dbReference type="ChEBI" id="CHEBI:57945"/>
        <dbReference type="EC" id="7.1.1.2"/>
    </reaction>
</comment>
<comment type="subcellular location">
    <subcellularLocation>
        <location evidence="1">Mitochondrion membrane</location>
        <topology evidence="1">Multi-pass membrane protein</topology>
    </subcellularLocation>
</comment>
<comment type="similarity">
    <text evidence="3">Belongs to the complex I subunit 3 family.</text>
</comment>
<feature type="chain" id="PRO_0000117718" description="NADH-ubiquinone oxidoreductase chain 3">
    <location>
        <begin position="1"/>
        <end position="117"/>
    </location>
</feature>
<feature type="transmembrane region" description="Helical" evidence="2">
    <location>
        <begin position="1"/>
        <end position="21"/>
    </location>
</feature>
<feature type="transmembrane region" description="Helical" evidence="2">
    <location>
        <begin position="56"/>
        <end position="76"/>
    </location>
</feature>
<feature type="transmembrane region" description="Helical" evidence="2">
    <location>
        <begin position="86"/>
        <end position="106"/>
    </location>
</feature>
<sequence>MLSLTYIVGIASALVIILLLVGLHLPSVMPDNEKLSAYECGFDPMGNARLPFSLRFFLVAILFLLFDLEIALILPYPLGVVFSENTFYNYWLVMLLVVVLTFGLMYEWLKGGLEWTE</sequence>
<organism>
    <name type="scientific">Branchiostoma lanceolatum</name>
    <name type="common">Common lancelet</name>
    <name type="synonym">Amphioxus lanceolatum</name>
    <dbReference type="NCBI Taxonomy" id="7740"/>
    <lineage>
        <taxon>Eukaryota</taxon>
        <taxon>Metazoa</taxon>
        <taxon>Chordata</taxon>
        <taxon>Cephalochordata</taxon>
        <taxon>Leptocardii</taxon>
        <taxon>Amphioxiformes</taxon>
        <taxon>Branchiostomatidae</taxon>
        <taxon>Branchiostoma</taxon>
    </lineage>
</organism>
<reference key="1">
    <citation type="journal article" date="1998" name="Nucleic Acids Res.">
        <title>Complete sequence of the amphioxus (Branchiostoma lanceolatum) mitochondrial genome: relations to vertebrates.</title>
        <authorList>
            <person name="Spruyt N."/>
            <person name="Delarbre C."/>
            <person name="Gachelin G."/>
            <person name="Laudet V."/>
        </authorList>
    </citation>
    <scope>NUCLEOTIDE SEQUENCE [GENOMIC DNA]</scope>
</reference>
<name>NU3M_BRALA</name>
<proteinExistence type="inferred from homology"/>
<dbReference type="EC" id="7.1.1.2"/>
<dbReference type="EMBL" id="Y16474">
    <property type="protein sequence ID" value="CAA76254.1"/>
    <property type="molecule type" value="Genomic_DNA"/>
</dbReference>
<dbReference type="PIR" id="A71391">
    <property type="entry name" value="A71391"/>
</dbReference>
<dbReference type="RefSeq" id="NP_007544.1">
    <property type="nucleotide sequence ID" value="NC_001912.1"/>
</dbReference>
<dbReference type="SMR" id="P69237"/>
<dbReference type="GeneID" id="808218"/>
<dbReference type="CTD" id="4537"/>
<dbReference type="GO" id="GO:0031966">
    <property type="term" value="C:mitochondrial membrane"/>
    <property type="evidence" value="ECO:0007669"/>
    <property type="project" value="UniProtKB-SubCell"/>
</dbReference>
<dbReference type="GO" id="GO:0030964">
    <property type="term" value="C:NADH dehydrogenase complex"/>
    <property type="evidence" value="ECO:0007669"/>
    <property type="project" value="TreeGrafter"/>
</dbReference>
<dbReference type="GO" id="GO:0008137">
    <property type="term" value="F:NADH dehydrogenase (ubiquinone) activity"/>
    <property type="evidence" value="ECO:0007669"/>
    <property type="project" value="UniProtKB-EC"/>
</dbReference>
<dbReference type="FunFam" id="1.20.58.1610:FF:000004">
    <property type="entry name" value="NADH-quinone oxidoreductase subunit A"/>
    <property type="match status" value="1"/>
</dbReference>
<dbReference type="Gene3D" id="1.20.58.1610">
    <property type="entry name" value="NADH:ubiquinone/plastoquinone oxidoreductase, chain 3"/>
    <property type="match status" value="1"/>
</dbReference>
<dbReference type="InterPro" id="IPR000440">
    <property type="entry name" value="NADH_UbQ/plastoQ_OxRdtase_su3"/>
</dbReference>
<dbReference type="InterPro" id="IPR038430">
    <property type="entry name" value="NDAH_ubi_oxred_su3_sf"/>
</dbReference>
<dbReference type="PANTHER" id="PTHR11058">
    <property type="entry name" value="NADH-UBIQUINONE OXIDOREDUCTASE CHAIN 3"/>
    <property type="match status" value="1"/>
</dbReference>
<dbReference type="PANTHER" id="PTHR11058:SF9">
    <property type="entry name" value="NADH-UBIQUINONE OXIDOREDUCTASE CHAIN 3"/>
    <property type="match status" value="1"/>
</dbReference>
<dbReference type="Pfam" id="PF00507">
    <property type="entry name" value="Oxidored_q4"/>
    <property type="match status" value="1"/>
</dbReference>